<dbReference type="EMBL" id="AY120853">
    <property type="protein sequence ID" value="AAM82727.1"/>
    <property type="molecule type" value="Genomic_DNA"/>
</dbReference>
<dbReference type="EMBL" id="CP000100">
    <property type="protein sequence ID" value="ABB57207.1"/>
    <property type="molecule type" value="Genomic_DNA"/>
</dbReference>
<dbReference type="RefSeq" id="WP_011242685.1">
    <property type="nucleotide sequence ID" value="NZ_JACJTX010000003.1"/>
</dbReference>
<dbReference type="SMR" id="Q8KPP3"/>
<dbReference type="STRING" id="1140.Synpcc7942_1177"/>
<dbReference type="TCDB" id="3.E.2.2.1">
    <property type="family name" value="the photosynthetic reaction center (prc) family"/>
</dbReference>
<dbReference type="PaxDb" id="1140-Synpcc7942_1177"/>
<dbReference type="GeneID" id="72430035"/>
<dbReference type="KEGG" id="syf:Synpcc7942_1177"/>
<dbReference type="eggNOG" id="ENOG5032RR6">
    <property type="taxonomic scope" value="Bacteria"/>
</dbReference>
<dbReference type="HOGENOM" id="CLU_194095_0_0_3"/>
<dbReference type="OrthoDB" id="514620at2"/>
<dbReference type="BioCyc" id="MetaCyc:SYNPCC7942_1177-MONOMER"/>
<dbReference type="BioCyc" id="SYNEL:SYNPCC7942_1177-MONOMER"/>
<dbReference type="Proteomes" id="UP000889800">
    <property type="component" value="Chromosome"/>
</dbReference>
<dbReference type="GO" id="GO:0009539">
    <property type="term" value="C:photosystem II reaction center"/>
    <property type="evidence" value="ECO:0007669"/>
    <property type="project" value="InterPro"/>
</dbReference>
<dbReference type="GO" id="GO:0031676">
    <property type="term" value="C:plasma membrane-derived thylakoid membrane"/>
    <property type="evidence" value="ECO:0007669"/>
    <property type="project" value="UniProtKB-SubCell"/>
</dbReference>
<dbReference type="GO" id="GO:0009055">
    <property type="term" value="F:electron transfer activity"/>
    <property type="evidence" value="ECO:0007669"/>
    <property type="project" value="UniProtKB-UniRule"/>
</dbReference>
<dbReference type="GO" id="GO:0020037">
    <property type="term" value="F:heme binding"/>
    <property type="evidence" value="ECO:0007669"/>
    <property type="project" value="InterPro"/>
</dbReference>
<dbReference type="GO" id="GO:0005506">
    <property type="term" value="F:iron ion binding"/>
    <property type="evidence" value="ECO:0007669"/>
    <property type="project" value="UniProtKB-UniRule"/>
</dbReference>
<dbReference type="GO" id="GO:0009767">
    <property type="term" value="P:photosynthetic electron transport chain"/>
    <property type="evidence" value="ECO:0007669"/>
    <property type="project" value="InterPro"/>
</dbReference>
<dbReference type="Gene3D" id="1.20.5.860">
    <property type="entry name" value="Photosystem II cytochrome b559, alpha subunit"/>
    <property type="match status" value="1"/>
</dbReference>
<dbReference type="HAMAP" id="MF_00642">
    <property type="entry name" value="PSII_PsbE"/>
    <property type="match status" value="1"/>
</dbReference>
<dbReference type="InterPro" id="IPR006217">
    <property type="entry name" value="PSII_cyt_b559_asu"/>
</dbReference>
<dbReference type="InterPro" id="IPR037025">
    <property type="entry name" value="PSII_cyt_b559_asu_sf"/>
</dbReference>
<dbReference type="InterPro" id="IPR006216">
    <property type="entry name" value="PSII_cyt_b559_CS"/>
</dbReference>
<dbReference type="InterPro" id="IPR013081">
    <property type="entry name" value="PSII_cyt_b559_N"/>
</dbReference>
<dbReference type="InterPro" id="IPR013082">
    <property type="entry name" value="PSII_cytb559_asu_lum"/>
</dbReference>
<dbReference type="NCBIfam" id="TIGR01332">
    <property type="entry name" value="cyt_b559_alpha"/>
    <property type="match status" value="1"/>
</dbReference>
<dbReference type="PANTHER" id="PTHR33391">
    <property type="entry name" value="CYTOCHROME B559 SUBUNIT BETA-RELATED"/>
    <property type="match status" value="1"/>
</dbReference>
<dbReference type="PANTHER" id="PTHR33391:SF9">
    <property type="entry name" value="CYTOCHROME B559 SUBUNIT BETA-RELATED"/>
    <property type="match status" value="1"/>
</dbReference>
<dbReference type="Pfam" id="PF00283">
    <property type="entry name" value="Cytochrom_B559"/>
    <property type="match status" value="1"/>
</dbReference>
<dbReference type="Pfam" id="PF00284">
    <property type="entry name" value="Cytochrom_B559a"/>
    <property type="match status" value="1"/>
</dbReference>
<dbReference type="PIRSF" id="PIRSF000036">
    <property type="entry name" value="PsbE"/>
    <property type="match status" value="1"/>
</dbReference>
<dbReference type="SUPFAM" id="SSF161045">
    <property type="entry name" value="Cytochrome b559 subunits"/>
    <property type="match status" value="1"/>
</dbReference>
<dbReference type="PROSITE" id="PS00537">
    <property type="entry name" value="CYTOCHROME_B559"/>
    <property type="match status" value="1"/>
</dbReference>
<feature type="chain" id="PRO_0000200345" description="Cytochrome b559 subunit alpha">
    <location>
        <begin position="1"/>
        <end position="83"/>
    </location>
</feature>
<feature type="transmembrane region" description="Helical" evidence="1">
    <location>
        <begin position="22"/>
        <end position="36"/>
    </location>
</feature>
<feature type="binding site" description="axial binding residue" evidence="1">
    <location>
        <position position="24"/>
    </location>
    <ligand>
        <name>heme</name>
        <dbReference type="ChEBI" id="CHEBI:30413"/>
        <note>ligand shared with beta subunit</note>
    </ligand>
    <ligandPart>
        <name>Fe</name>
        <dbReference type="ChEBI" id="CHEBI:18248"/>
    </ligandPart>
</feature>
<organism>
    <name type="scientific">Synechococcus elongatus (strain ATCC 33912 / PCC 7942 / FACHB-805)</name>
    <name type="common">Anacystis nidulans R2</name>
    <dbReference type="NCBI Taxonomy" id="1140"/>
    <lineage>
        <taxon>Bacteria</taxon>
        <taxon>Bacillati</taxon>
        <taxon>Cyanobacteriota</taxon>
        <taxon>Cyanophyceae</taxon>
        <taxon>Synechococcales</taxon>
        <taxon>Synechococcaceae</taxon>
        <taxon>Synechococcus</taxon>
    </lineage>
</organism>
<proteinExistence type="inferred from homology"/>
<gene>
    <name evidence="1" type="primary">psbE</name>
    <name type="ordered locus">Synpcc7942_1177</name>
    <name type="ORF">see0052</name>
</gene>
<comment type="function">
    <text evidence="1">This b-type cytochrome is tightly associated with the reaction center of photosystem II (PSII). PSII is a light-driven water:plastoquinone oxidoreductase that uses light energy to abstract electrons from H(2)O, generating O(2) and a proton gradient subsequently used for ATP formation. It consists of a core antenna complex that captures photons, and an electron transfer chain that converts photonic excitation into a charge separation.</text>
</comment>
<comment type="cofactor">
    <cofactor evidence="1">
        <name>heme b</name>
        <dbReference type="ChEBI" id="CHEBI:60344"/>
    </cofactor>
    <text evidence="1">With its partner (PsbF) binds heme. PSII binds additional chlorophylls, carotenoids and specific lipids.</text>
</comment>
<comment type="subunit">
    <text evidence="1">Heterodimer of an alpha subunit and a beta subunit. PSII is composed of 1 copy each of membrane proteins PsbA, PsbB, PsbC, PsbD, PsbE, PsbF, PsbH, PsbI, PsbJ, PsbK, PsbL, PsbM, PsbT, PsbX, PsbY, PsbZ, Psb30/Ycf12, peripheral proteins PsbO, CyanoQ (PsbQ), PsbU, PsbV and a large number of cofactors. It forms dimeric complexes.</text>
</comment>
<comment type="subcellular location">
    <subcellularLocation>
        <location evidence="1">Cellular thylakoid membrane</location>
        <topology evidence="1">Single-pass membrane protein</topology>
    </subcellularLocation>
</comment>
<comment type="similarity">
    <text evidence="1">Belongs to the PsbE/PsbF family.</text>
</comment>
<name>PSBE_SYNE7</name>
<accession>Q8KPP3</accession>
<accession>Q31P12</accession>
<sequence>MAGGSTGERPFTDIITSIRYWVIHSITIPALFIAGWLFVSTGLAYDAFGTPRPNEYFTQDRTEVPIVSDRYSAKQQVDRFSAK</sequence>
<evidence type="ECO:0000255" key="1">
    <source>
        <dbReference type="HAMAP-Rule" id="MF_00642"/>
    </source>
</evidence>
<keyword id="KW-0249">Electron transport</keyword>
<keyword id="KW-0349">Heme</keyword>
<keyword id="KW-0408">Iron</keyword>
<keyword id="KW-0472">Membrane</keyword>
<keyword id="KW-0479">Metal-binding</keyword>
<keyword id="KW-0602">Photosynthesis</keyword>
<keyword id="KW-0604">Photosystem II</keyword>
<keyword id="KW-1185">Reference proteome</keyword>
<keyword id="KW-0793">Thylakoid</keyword>
<keyword id="KW-0812">Transmembrane</keyword>
<keyword id="KW-1133">Transmembrane helix</keyword>
<keyword id="KW-0813">Transport</keyword>
<protein>
    <recommendedName>
        <fullName evidence="1">Cytochrome b559 subunit alpha</fullName>
    </recommendedName>
    <alternativeName>
        <fullName evidence="1">PSII reaction center subunit V</fullName>
    </alternativeName>
</protein>
<reference key="1">
    <citation type="submission" date="2002-06" db="EMBL/GenBank/DDBJ databases">
        <title>Synechococcus elongatus PCC7942 cosmid 7G3.</title>
        <authorList>
            <person name="Holtman C.K."/>
            <person name="Sandoval P."/>
            <person name="Chen Y."/>
            <person name="Socias T."/>
            <person name="Mohler B.J."/>
            <person name="McMurtry S."/>
            <person name="Gonzalez A."/>
            <person name="Salinas I."/>
            <person name="Golden S.S."/>
            <person name="Youderian P."/>
        </authorList>
    </citation>
    <scope>NUCLEOTIDE SEQUENCE [GENOMIC DNA]</scope>
</reference>
<reference key="2">
    <citation type="submission" date="2005-08" db="EMBL/GenBank/DDBJ databases">
        <title>Complete sequence of chromosome 1 of Synechococcus elongatus PCC 7942.</title>
        <authorList>
            <consortium name="US DOE Joint Genome Institute"/>
            <person name="Copeland A."/>
            <person name="Lucas S."/>
            <person name="Lapidus A."/>
            <person name="Barry K."/>
            <person name="Detter J.C."/>
            <person name="Glavina T."/>
            <person name="Hammon N."/>
            <person name="Israni S."/>
            <person name="Pitluck S."/>
            <person name="Schmutz J."/>
            <person name="Larimer F."/>
            <person name="Land M."/>
            <person name="Kyrpides N."/>
            <person name="Lykidis A."/>
            <person name="Golden S."/>
            <person name="Richardson P."/>
        </authorList>
    </citation>
    <scope>NUCLEOTIDE SEQUENCE [LARGE SCALE GENOMIC DNA]</scope>
    <source>
        <strain>ATCC 33912 / PCC 7942 / FACHB-805</strain>
    </source>
</reference>